<reference key="1">
    <citation type="journal article" date="2010" name="J. Bacteriol.">
        <title>The genome of the amoeba symbiont 'Candidatus Amoebophilus asiaticus' reveals common mechanisms for host cell interaction among amoeba-associated bacteria.</title>
        <authorList>
            <person name="Schmitz-Esser S."/>
            <person name="Tischler P."/>
            <person name="Arnold R."/>
            <person name="Montanaro J."/>
            <person name="Wagner M."/>
            <person name="Rattei T."/>
            <person name="Horn M."/>
        </authorList>
    </citation>
    <scope>NUCLEOTIDE SEQUENCE [LARGE SCALE GENOMIC DNA]</scope>
    <source>
        <strain>5a2</strain>
    </source>
</reference>
<sequence length="427" mass="46519">MSIIKSVYARQILDSRGNPTIEVDVCTEQGFVGRAAVPSGASTGLHEAMELRDKDSAVYLGKGVQKAIKHVKEIIAPVLIGRSVFNQQAIDTLLIELDGTLNKARLGANAILGTSIAVAKAAAMSLNIPLYQYIGGLNAYILPTPMINIFNGGAHADNNVDIQEFMVMPIKANSFAEALRMGVEVFHQLGRILKEKGLSTNVGDEGGYASNLPSNEAAMEFILQAIEKAGYQPGEDISIALDAASTEFYQAEKEVYHFKKSTGIKLTSTELVDFWKNWVQKYPIISIEDGMAEDDWEGWHQLTQAIGSKVQLVGDDLFVTNTKRLAKGIEQNIANAVLIKMNQVGTLSETLDTVNLAKKHGYQNIISHRSGETEDSTIADLAVALNAGQIKTGSVSRTDRTAKYNQLLRIEETLGEHARFAGHPFKK</sequence>
<feature type="chain" id="PRO_1000115825" description="Enolase">
    <location>
        <begin position="1"/>
        <end position="427"/>
    </location>
</feature>
<feature type="active site" description="Proton donor" evidence="1">
    <location>
        <position position="205"/>
    </location>
</feature>
<feature type="active site" description="Proton acceptor" evidence="1">
    <location>
        <position position="340"/>
    </location>
</feature>
<feature type="binding site" evidence="1">
    <location>
        <position position="163"/>
    </location>
    <ligand>
        <name>(2R)-2-phosphoglycerate</name>
        <dbReference type="ChEBI" id="CHEBI:58289"/>
    </ligand>
</feature>
<feature type="binding site" evidence="1">
    <location>
        <position position="242"/>
    </location>
    <ligand>
        <name>Mg(2+)</name>
        <dbReference type="ChEBI" id="CHEBI:18420"/>
    </ligand>
</feature>
<feature type="binding site" evidence="1">
    <location>
        <position position="288"/>
    </location>
    <ligand>
        <name>Mg(2+)</name>
        <dbReference type="ChEBI" id="CHEBI:18420"/>
    </ligand>
</feature>
<feature type="binding site" evidence="1">
    <location>
        <position position="315"/>
    </location>
    <ligand>
        <name>Mg(2+)</name>
        <dbReference type="ChEBI" id="CHEBI:18420"/>
    </ligand>
</feature>
<feature type="binding site" evidence="1">
    <location>
        <position position="340"/>
    </location>
    <ligand>
        <name>(2R)-2-phosphoglycerate</name>
        <dbReference type="ChEBI" id="CHEBI:58289"/>
    </ligand>
</feature>
<feature type="binding site" evidence="1">
    <location>
        <position position="369"/>
    </location>
    <ligand>
        <name>(2R)-2-phosphoglycerate</name>
        <dbReference type="ChEBI" id="CHEBI:58289"/>
    </ligand>
</feature>
<feature type="binding site" evidence="1">
    <location>
        <position position="370"/>
    </location>
    <ligand>
        <name>(2R)-2-phosphoglycerate</name>
        <dbReference type="ChEBI" id="CHEBI:58289"/>
    </ligand>
</feature>
<feature type="binding site" evidence="1">
    <location>
        <position position="391"/>
    </location>
    <ligand>
        <name>(2R)-2-phosphoglycerate</name>
        <dbReference type="ChEBI" id="CHEBI:58289"/>
    </ligand>
</feature>
<organism>
    <name type="scientific">Amoebophilus asiaticus (strain 5a2)</name>
    <dbReference type="NCBI Taxonomy" id="452471"/>
    <lineage>
        <taxon>Bacteria</taxon>
        <taxon>Pseudomonadati</taxon>
        <taxon>Bacteroidota</taxon>
        <taxon>Cytophagia</taxon>
        <taxon>Cytophagales</taxon>
        <taxon>Amoebophilaceae</taxon>
        <taxon>Candidatus Amoebophilus</taxon>
    </lineage>
</organism>
<gene>
    <name evidence="1" type="primary">eno</name>
    <name type="ordered locus">Aasi_0151</name>
</gene>
<proteinExistence type="inferred from homology"/>
<accession>B3EUH8</accession>
<dbReference type="EC" id="4.2.1.11" evidence="1"/>
<dbReference type="EMBL" id="CP001102">
    <property type="protein sequence ID" value="ACE05597.1"/>
    <property type="molecule type" value="Genomic_DNA"/>
</dbReference>
<dbReference type="RefSeq" id="WP_012472363.1">
    <property type="nucleotide sequence ID" value="NC_010830.1"/>
</dbReference>
<dbReference type="SMR" id="B3EUH8"/>
<dbReference type="STRING" id="452471.Aasi_0151"/>
<dbReference type="KEGG" id="aas:Aasi_0151"/>
<dbReference type="eggNOG" id="COG0148">
    <property type="taxonomic scope" value="Bacteria"/>
</dbReference>
<dbReference type="HOGENOM" id="CLU_031223_2_1_10"/>
<dbReference type="OrthoDB" id="9804716at2"/>
<dbReference type="UniPathway" id="UPA00109">
    <property type="reaction ID" value="UER00187"/>
</dbReference>
<dbReference type="Proteomes" id="UP000001227">
    <property type="component" value="Chromosome"/>
</dbReference>
<dbReference type="GO" id="GO:0009986">
    <property type="term" value="C:cell surface"/>
    <property type="evidence" value="ECO:0007669"/>
    <property type="project" value="UniProtKB-SubCell"/>
</dbReference>
<dbReference type="GO" id="GO:0005576">
    <property type="term" value="C:extracellular region"/>
    <property type="evidence" value="ECO:0007669"/>
    <property type="project" value="UniProtKB-SubCell"/>
</dbReference>
<dbReference type="GO" id="GO:0000015">
    <property type="term" value="C:phosphopyruvate hydratase complex"/>
    <property type="evidence" value="ECO:0007669"/>
    <property type="project" value="InterPro"/>
</dbReference>
<dbReference type="GO" id="GO:0000287">
    <property type="term" value="F:magnesium ion binding"/>
    <property type="evidence" value="ECO:0007669"/>
    <property type="project" value="UniProtKB-UniRule"/>
</dbReference>
<dbReference type="GO" id="GO:0004634">
    <property type="term" value="F:phosphopyruvate hydratase activity"/>
    <property type="evidence" value="ECO:0007669"/>
    <property type="project" value="UniProtKB-UniRule"/>
</dbReference>
<dbReference type="GO" id="GO:0006096">
    <property type="term" value="P:glycolytic process"/>
    <property type="evidence" value="ECO:0007669"/>
    <property type="project" value="UniProtKB-UniRule"/>
</dbReference>
<dbReference type="CDD" id="cd03313">
    <property type="entry name" value="enolase"/>
    <property type="match status" value="1"/>
</dbReference>
<dbReference type="FunFam" id="3.20.20.120:FF:000001">
    <property type="entry name" value="Enolase"/>
    <property type="match status" value="1"/>
</dbReference>
<dbReference type="FunFam" id="3.30.390.10:FF:000001">
    <property type="entry name" value="Enolase"/>
    <property type="match status" value="1"/>
</dbReference>
<dbReference type="Gene3D" id="3.20.20.120">
    <property type="entry name" value="Enolase-like C-terminal domain"/>
    <property type="match status" value="1"/>
</dbReference>
<dbReference type="Gene3D" id="3.30.390.10">
    <property type="entry name" value="Enolase-like, N-terminal domain"/>
    <property type="match status" value="1"/>
</dbReference>
<dbReference type="HAMAP" id="MF_00318">
    <property type="entry name" value="Enolase"/>
    <property type="match status" value="1"/>
</dbReference>
<dbReference type="InterPro" id="IPR000941">
    <property type="entry name" value="Enolase"/>
</dbReference>
<dbReference type="InterPro" id="IPR036849">
    <property type="entry name" value="Enolase-like_C_sf"/>
</dbReference>
<dbReference type="InterPro" id="IPR029017">
    <property type="entry name" value="Enolase-like_N"/>
</dbReference>
<dbReference type="InterPro" id="IPR020810">
    <property type="entry name" value="Enolase_C"/>
</dbReference>
<dbReference type="InterPro" id="IPR020809">
    <property type="entry name" value="Enolase_CS"/>
</dbReference>
<dbReference type="InterPro" id="IPR020811">
    <property type="entry name" value="Enolase_N"/>
</dbReference>
<dbReference type="NCBIfam" id="TIGR01060">
    <property type="entry name" value="eno"/>
    <property type="match status" value="1"/>
</dbReference>
<dbReference type="PANTHER" id="PTHR11902">
    <property type="entry name" value="ENOLASE"/>
    <property type="match status" value="1"/>
</dbReference>
<dbReference type="PANTHER" id="PTHR11902:SF1">
    <property type="entry name" value="ENOLASE"/>
    <property type="match status" value="1"/>
</dbReference>
<dbReference type="Pfam" id="PF00113">
    <property type="entry name" value="Enolase_C"/>
    <property type="match status" value="1"/>
</dbReference>
<dbReference type="Pfam" id="PF03952">
    <property type="entry name" value="Enolase_N"/>
    <property type="match status" value="1"/>
</dbReference>
<dbReference type="PIRSF" id="PIRSF001400">
    <property type="entry name" value="Enolase"/>
    <property type="match status" value="1"/>
</dbReference>
<dbReference type="PRINTS" id="PR00148">
    <property type="entry name" value="ENOLASE"/>
</dbReference>
<dbReference type="SFLD" id="SFLDF00002">
    <property type="entry name" value="enolase"/>
    <property type="match status" value="1"/>
</dbReference>
<dbReference type="SFLD" id="SFLDG00178">
    <property type="entry name" value="enolase"/>
    <property type="match status" value="1"/>
</dbReference>
<dbReference type="SMART" id="SM01192">
    <property type="entry name" value="Enolase_C"/>
    <property type="match status" value="1"/>
</dbReference>
<dbReference type="SMART" id="SM01193">
    <property type="entry name" value="Enolase_N"/>
    <property type="match status" value="1"/>
</dbReference>
<dbReference type="SUPFAM" id="SSF51604">
    <property type="entry name" value="Enolase C-terminal domain-like"/>
    <property type="match status" value="1"/>
</dbReference>
<dbReference type="SUPFAM" id="SSF54826">
    <property type="entry name" value="Enolase N-terminal domain-like"/>
    <property type="match status" value="1"/>
</dbReference>
<dbReference type="PROSITE" id="PS00164">
    <property type="entry name" value="ENOLASE"/>
    <property type="match status" value="1"/>
</dbReference>
<keyword id="KW-0963">Cytoplasm</keyword>
<keyword id="KW-0324">Glycolysis</keyword>
<keyword id="KW-0456">Lyase</keyword>
<keyword id="KW-0460">Magnesium</keyword>
<keyword id="KW-0479">Metal-binding</keyword>
<keyword id="KW-1185">Reference proteome</keyword>
<keyword id="KW-0964">Secreted</keyword>
<protein>
    <recommendedName>
        <fullName evidence="1">Enolase</fullName>
        <ecNumber evidence="1">4.2.1.11</ecNumber>
    </recommendedName>
    <alternativeName>
        <fullName evidence="1">2-phospho-D-glycerate hydro-lyase</fullName>
    </alternativeName>
    <alternativeName>
        <fullName evidence="1">2-phosphoglycerate dehydratase</fullName>
    </alternativeName>
</protein>
<comment type="function">
    <text evidence="1">Catalyzes the reversible conversion of 2-phosphoglycerate (2-PG) into phosphoenolpyruvate (PEP). It is essential for the degradation of carbohydrates via glycolysis.</text>
</comment>
<comment type="catalytic activity">
    <reaction evidence="1">
        <text>(2R)-2-phosphoglycerate = phosphoenolpyruvate + H2O</text>
        <dbReference type="Rhea" id="RHEA:10164"/>
        <dbReference type="ChEBI" id="CHEBI:15377"/>
        <dbReference type="ChEBI" id="CHEBI:58289"/>
        <dbReference type="ChEBI" id="CHEBI:58702"/>
        <dbReference type="EC" id="4.2.1.11"/>
    </reaction>
</comment>
<comment type="cofactor">
    <cofactor evidence="1">
        <name>Mg(2+)</name>
        <dbReference type="ChEBI" id="CHEBI:18420"/>
    </cofactor>
    <text evidence="1">Binds a second Mg(2+) ion via substrate during catalysis.</text>
</comment>
<comment type="pathway">
    <text evidence="1">Carbohydrate degradation; glycolysis; pyruvate from D-glyceraldehyde 3-phosphate: step 4/5.</text>
</comment>
<comment type="subcellular location">
    <subcellularLocation>
        <location evidence="1">Cytoplasm</location>
    </subcellularLocation>
    <subcellularLocation>
        <location evidence="1">Secreted</location>
    </subcellularLocation>
    <subcellularLocation>
        <location evidence="1">Cell surface</location>
    </subcellularLocation>
    <text evidence="1">Fractions of enolase are present in both the cytoplasm and on the cell surface.</text>
</comment>
<comment type="similarity">
    <text evidence="1">Belongs to the enolase family.</text>
</comment>
<name>ENO_AMOA5</name>
<evidence type="ECO:0000255" key="1">
    <source>
        <dbReference type="HAMAP-Rule" id="MF_00318"/>
    </source>
</evidence>